<evidence type="ECO:0000250" key="1"/>
<evidence type="ECO:0000255" key="2"/>
<evidence type="ECO:0000305" key="3"/>
<sequence>MNITKLTPWFLFSCLILLSDYIKVNSSISPSSEQTQEDGFFGFKPTKLFVFGDSYADTGNTPFLIVPSWRFPNGITFPGIPTGRFSDGRVSTDYLAKYIGVRTPITYKWGKYGRPRLAVKRGMNFAYGGAGAFETMFKLVPTASVQIDSFEQLLMRNVYSPADLNSSVAFFSIIGNDYLTYDRRNGSEEGRSALTRKVVKQILLDVKRIKDLGVRKVLVALSPPQKCLPKLVTPKGCDTNDTSTYLHNSLLRKGLIKLNDKEINNNDKSFMTLDLYNAFVTIFKNKGVSGVSTFPDPFKACCATKRGTFCGDRSLSGKKLYTLCDDPKSFFFWDNVHISDQGWRSVFSLLLPDSQF</sequence>
<protein>
    <recommendedName>
        <fullName>GDSL esterase/lipase At2g36325</fullName>
        <ecNumber>3.1.1.-</ecNumber>
    </recommendedName>
    <alternativeName>
        <fullName>Extracellular lipase At2g36325</fullName>
    </alternativeName>
</protein>
<organism>
    <name type="scientific">Arabidopsis thaliana</name>
    <name type="common">Mouse-ear cress</name>
    <dbReference type="NCBI Taxonomy" id="3702"/>
    <lineage>
        <taxon>Eukaryota</taxon>
        <taxon>Viridiplantae</taxon>
        <taxon>Streptophyta</taxon>
        <taxon>Embryophyta</taxon>
        <taxon>Tracheophyta</taxon>
        <taxon>Spermatophyta</taxon>
        <taxon>Magnoliopsida</taxon>
        <taxon>eudicotyledons</taxon>
        <taxon>Gunneridae</taxon>
        <taxon>Pentapetalae</taxon>
        <taxon>rosids</taxon>
        <taxon>malvids</taxon>
        <taxon>Brassicales</taxon>
        <taxon>Brassicaceae</taxon>
        <taxon>Camelineae</taxon>
        <taxon>Arabidopsis</taxon>
    </lineage>
</organism>
<keyword id="KW-0325">Glycoprotein</keyword>
<keyword id="KW-0378">Hydrolase</keyword>
<keyword id="KW-0442">Lipid degradation</keyword>
<keyword id="KW-0443">Lipid metabolism</keyword>
<keyword id="KW-1185">Reference proteome</keyword>
<keyword id="KW-0964">Secreted</keyword>
<keyword id="KW-0732">Signal</keyword>
<dbReference type="EC" id="3.1.1.-"/>
<dbReference type="EMBL" id="AC006921">
    <property type="protein sequence ID" value="AAD21433.1"/>
    <property type="status" value="ALT_SEQ"/>
    <property type="molecule type" value="Genomic_DNA"/>
</dbReference>
<dbReference type="EMBL" id="CP002685">
    <property type="protein sequence ID" value="AEC09233.1"/>
    <property type="molecule type" value="Genomic_DNA"/>
</dbReference>
<dbReference type="EMBL" id="AY093048">
    <property type="protein sequence ID" value="AAM13047.1"/>
    <property type="molecule type" value="mRNA"/>
</dbReference>
<dbReference type="EMBL" id="AY128930">
    <property type="protein sequence ID" value="AAM91330.1"/>
    <property type="molecule type" value="mRNA"/>
</dbReference>
<dbReference type="EMBL" id="AK221676">
    <property type="protein sequence ID" value="BAD95367.1"/>
    <property type="molecule type" value="mRNA"/>
</dbReference>
<dbReference type="RefSeq" id="NP_001078012.1">
    <property type="nucleotide sequence ID" value="NM_001084543.2"/>
</dbReference>
<dbReference type="SMR" id="Q8RWJ4"/>
<dbReference type="FunCoup" id="Q8RWJ4">
    <property type="interactions" value="20"/>
</dbReference>
<dbReference type="STRING" id="3702.Q8RWJ4"/>
<dbReference type="GlyGen" id="Q8RWJ4">
    <property type="glycosylation" value="4 sites"/>
</dbReference>
<dbReference type="iPTMnet" id="Q8RWJ4"/>
<dbReference type="PaxDb" id="3702-AT2G36325.1"/>
<dbReference type="ProteomicsDB" id="221977"/>
<dbReference type="EnsemblPlants" id="AT2G36325.1">
    <property type="protein sequence ID" value="AT2G36325.1"/>
    <property type="gene ID" value="AT2G36325"/>
</dbReference>
<dbReference type="GeneID" id="5007939"/>
<dbReference type="Gramene" id="AT2G36325.1">
    <property type="protein sequence ID" value="AT2G36325.1"/>
    <property type="gene ID" value="AT2G36325"/>
</dbReference>
<dbReference type="KEGG" id="ath:AT2G36325"/>
<dbReference type="Araport" id="AT2G36325"/>
<dbReference type="TAIR" id="AT2G36325"/>
<dbReference type="eggNOG" id="ENOG502QU3Y">
    <property type="taxonomic scope" value="Eukaryota"/>
</dbReference>
<dbReference type="HOGENOM" id="CLU_015101_2_1_1"/>
<dbReference type="InParanoid" id="Q8RWJ4"/>
<dbReference type="OMA" id="CCATKRG"/>
<dbReference type="PhylomeDB" id="Q8RWJ4"/>
<dbReference type="PRO" id="PR:Q8RWJ4"/>
<dbReference type="Proteomes" id="UP000006548">
    <property type="component" value="Chromosome 2"/>
</dbReference>
<dbReference type="ExpressionAtlas" id="Q8RWJ4">
    <property type="expression patterns" value="baseline and differential"/>
</dbReference>
<dbReference type="GO" id="GO:0005576">
    <property type="term" value="C:extracellular region"/>
    <property type="evidence" value="ECO:0007669"/>
    <property type="project" value="UniProtKB-SubCell"/>
</dbReference>
<dbReference type="GO" id="GO:0099503">
    <property type="term" value="C:secretory vesicle"/>
    <property type="evidence" value="ECO:0007005"/>
    <property type="project" value="TAIR"/>
</dbReference>
<dbReference type="GO" id="GO:0016788">
    <property type="term" value="F:hydrolase activity, acting on ester bonds"/>
    <property type="evidence" value="ECO:0007669"/>
    <property type="project" value="InterPro"/>
</dbReference>
<dbReference type="GO" id="GO:0016042">
    <property type="term" value="P:lipid catabolic process"/>
    <property type="evidence" value="ECO:0007669"/>
    <property type="project" value="UniProtKB-KW"/>
</dbReference>
<dbReference type="CDD" id="cd01837">
    <property type="entry name" value="SGNH_plant_lipase_like"/>
    <property type="match status" value="1"/>
</dbReference>
<dbReference type="Gene3D" id="3.40.50.1110">
    <property type="entry name" value="SGNH hydrolase"/>
    <property type="match status" value="1"/>
</dbReference>
<dbReference type="InterPro" id="IPR001087">
    <property type="entry name" value="GDSL"/>
</dbReference>
<dbReference type="InterPro" id="IPR036514">
    <property type="entry name" value="SGNH_hydro_sf"/>
</dbReference>
<dbReference type="InterPro" id="IPR035669">
    <property type="entry name" value="SGNH_plant_lipase-like"/>
</dbReference>
<dbReference type="PANTHER" id="PTHR46020:SF5">
    <property type="entry name" value="GENOME ASSEMBLY, CHROMOSOME: A03"/>
    <property type="match status" value="1"/>
</dbReference>
<dbReference type="PANTHER" id="PTHR46020">
    <property type="entry name" value="OSJNBB0059K02.9 PROTEIN"/>
    <property type="match status" value="1"/>
</dbReference>
<dbReference type="Pfam" id="PF00657">
    <property type="entry name" value="Lipase_GDSL"/>
    <property type="match status" value="1"/>
</dbReference>
<dbReference type="SUPFAM" id="SSF52266">
    <property type="entry name" value="SGNH hydrolase"/>
    <property type="match status" value="1"/>
</dbReference>
<gene>
    <name type="ordered locus">At2g36325</name>
    <name type="ORF">F2H17.6</name>
</gene>
<name>GDL45_ARATH</name>
<proteinExistence type="evidence at transcript level"/>
<accession>Q8RWJ4</accession>
<accession>Q9SJM5</accession>
<comment type="subcellular location">
    <subcellularLocation>
        <location evidence="3">Secreted</location>
    </subcellularLocation>
</comment>
<comment type="similarity">
    <text evidence="3">Belongs to the 'GDSL' lipolytic enzyme family.</text>
</comment>
<comment type="sequence caution" evidence="3">
    <conflict type="erroneous gene model prediction">
        <sequence resource="EMBL-CDS" id="AAD21433"/>
    </conflict>
    <text>The predicted gene At2g36330 has been split into 2 genes: At2g36325 and At2g36330.</text>
</comment>
<feature type="signal peptide" evidence="2">
    <location>
        <begin position="1"/>
        <end position="26"/>
    </location>
</feature>
<feature type="chain" id="PRO_0000367386" description="GDSL esterase/lipase At2g36325">
    <location>
        <begin position="27"/>
        <end position="356"/>
    </location>
</feature>
<feature type="active site" description="Nucleophile" evidence="1">
    <location>
        <position position="54"/>
    </location>
</feature>
<feature type="active site" evidence="1">
    <location>
        <position position="334"/>
    </location>
</feature>
<feature type="active site" evidence="1">
    <location>
        <position position="337"/>
    </location>
</feature>
<feature type="glycosylation site" description="N-linked (GlcNAc...) asparagine" evidence="2">
    <location>
        <position position="25"/>
    </location>
</feature>
<feature type="glycosylation site" description="N-linked (GlcNAc...) asparagine" evidence="2">
    <location>
        <position position="165"/>
    </location>
</feature>
<feature type="glycosylation site" description="N-linked (GlcNAc...) asparagine" evidence="2">
    <location>
        <position position="185"/>
    </location>
</feature>
<feature type="glycosylation site" description="N-linked (GlcNAc...) asparagine" evidence="2">
    <location>
        <position position="240"/>
    </location>
</feature>
<feature type="sequence conflict" description="In Ref. 3; AAM13047/AAM91330 and 4; BAD95367." evidence="3" ref="3 4">
    <original>G</original>
    <variation>E</variation>
    <location>
        <position position="129"/>
    </location>
</feature>
<reference key="1">
    <citation type="journal article" date="1999" name="Nature">
        <title>Sequence and analysis of chromosome 2 of the plant Arabidopsis thaliana.</title>
        <authorList>
            <person name="Lin X."/>
            <person name="Kaul S."/>
            <person name="Rounsley S.D."/>
            <person name="Shea T.P."/>
            <person name="Benito M.-I."/>
            <person name="Town C.D."/>
            <person name="Fujii C.Y."/>
            <person name="Mason T.M."/>
            <person name="Bowman C.L."/>
            <person name="Barnstead M.E."/>
            <person name="Feldblyum T.V."/>
            <person name="Buell C.R."/>
            <person name="Ketchum K.A."/>
            <person name="Lee J.J."/>
            <person name="Ronning C.M."/>
            <person name="Koo H.L."/>
            <person name="Moffat K.S."/>
            <person name="Cronin L.A."/>
            <person name="Shen M."/>
            <person name="Pai G."/>
            <person name="Van Aken S."/>
            <person name="Umayam L."/>
            <person name="Tallon L.J."/>
            <person name="Gill J.E."/>
            <person name="Adams M.D."/>
            <person name="Carrera A.J."/>
            <person name="Creasy T.H."/>
            <person name="Goodman H.M."/>
            <person name="Somerville C.R."/>
            <person name="Copenhaver G.P."/>
            <person name="Preuss D."/>
            <person name="Nierman W.C."/>
            <person name="White O."/>
            <person name="Eisen J.A."/>
            <person name="Salzberg S.L."/>
            <person name="Fraser C.M."/>
            <person name="Venter J.C."/>
        </authorList>
    </citation>
    <scope>NUCLEOTIDE SEQUENCE [LARGE SCALE GENOMIC DNA]</scope>
    <source>
        <strain>cv. Columbia</strain>
    </source>
</reference>
<reference key="2">
    <citation type="journal article" date="2017" name="Plant J.">
        <title>Araport11: a complete reannotation of the Arabidopsis thaliana reference genome.</title>
        <authorList>
            <person name="Cheng C.Y."/>
            <person name="Krishnakumar V."/>
            <person name="Chan A.P."/>
            <person name="Thibaud-Nissen F."/>
            <person name="Schobel S."/>
            <person name="Town C.D."/>
        </authorList>
    </citation>
    <scope>GENOME REANNOTATION</scope>
    <source>
        <strain>cv. Columbia</strain>
    </source>
</reference>
<reference key="3">
    <citation type="journal article" date="2003" name="Science">
        <title>Empirical analysis of transcriptional activity in the Arabidopsis genome.</title>
        <authorList>
            <person name="Yamada K."/>
            <person name="Lim J."/>
            <person name="Dale J.M."/>
            <person name="Chen H."/>
            <person name="Shinn P."/>
            <person name="Palm C.J."/>
            <person name="Southwick A.M."/>
            <person name="Wu H.C."/>
            <person name="Kim C.J."/>
            <person name="Nguyen M."/>
            <person name="Pham P.K."/>
            <person name="Cheuk R.F."/>
            <person name="Karlin-Newmann G."/>
            <person name="Liu S.X."/>
            <person name="Lam B."/>
            <person name="Sakano H."/>
            <person name="Wu T."/>
            <person name="Yu G."/>
            <person name="Miranda M."/>
            <person name="Quach H.L."/>
            <person name="Tripp M."/>
            <person name="Chang C.H."/>
            <person name="Lee J.M."/>
            <person name="Toriumi M.J."/>
            <person name="Chan M.M."/>
            <person name="Tang C.C."/>
            <person name="Onodera C.S."/>
            <person name="Deng J.M."/>
            <person name="Akiyama K."/>
            <person name="Ansari Y."/>
            <person name="Arakawa T."/>
            <person name="Banh J."/>
            <person name="Banno F."/>
            <person name="Bowser L."/>
            <person name="Brooks S.Y."/>
            <person name="Carninci P."/>
            <person name="Chao Q."/>
            <person name="Choy N."/>
            <person name="Enju A."/>
            <person name="Goldsmith A.D."/>
            <person name="Gurjal M."/>
            <person name="Hansen N.F."/>
            <person name="Hayashizaki Y."/>
            <person name="Johnson-Hopson C."/>
            <person name="Hsuan V.W."/>
            <person name="Iida K."/>
            <person name="Karnes M."/>
            <person name="Khan S."/>
            <person name="Koesema E."/>
            <person name="Ishida J."/>
            <person name="Jiang P.X."/>
            <person name="Jones T."/>
            <person name="Kawai J."/>
            <person name="Kamiya A."/>
            <person name="Meyers C."/>
            <person name="Nakajima M."/>
            <person name="Narusaka M."/>
            <person name="Seki M."/>
            <person name="Sakurai T."/>
            <person name="Satou M."/>
            <person name="Tamse R."/>
            <person name="Vaysberg M."/>
            <person name="Wallender E.K."/>
            <person name="Wong C."/>
            <person name="Yamamura Y."/>
            <person name="Yuan S."/>
            <person name="Shinozaki K."/>
            <person name="Davis R.W."/>
            <person name="Theologis A."/>
            <person name="Ecker J.R."/>
        </authorList>
    </citation>
    <scope>NUCLEOTIDE SEQUENCE [LARGE SCALE MRNA]</scope>
    <source>
        <strain>cv. Columbia</strain>
    </source>
</reference>
<reference key="4">
    <citation type="submission" date="2005-03" db="EMBL/GenBank/DDBJ databases">
        <title>Large-scale analysis of RIKEN Arabidopsis full-length (RAFL) cDNAs.</title>
        <authorList>
            <person name="Totoki Y."/>
            <person name="Seki M."/>
            <person name="Ishida J."/>
            <person name="Nakajima M."/>
            <person name="Enju A."/>
            <person name="Kamiya A."/>
            <person name="Narusaka M."/>
            <person name="Shin-i T."/>
            <person name="Nakagawa M."/>
            <person name="Sakamoto N."/>
            <person name="Oishi K."/>
            <person name="Kohara Y."/>
            <person name="Kobayashi M."/>
            <person name="Toyoda A."/>
            <person name="Sakaki Y."/>
            <person name="Sakurai T."/>
            <person name="Iida K."/>
            <person name="Akiyama K."/>
            <person name="Satou M."/>
            <person name="Toyoda T."/>
            <person name="Konagaya A."/>
            <person name="Carninci P."/>
            <person name="Kawai J."/>
            <person name="Hayashizaki Y."/>
            <person name="Shinozaki K."/>
        </authorList>
    </citation>
    <scope>NUCLEOTIDE SEQUENCE [LARGE SCALE MRNA]</scope>
    <source>
        <strain>cv. Columbia</strain>
    </source>
</reference>
<reference key="5">
    <citation type="journal article" date="2004" name="Prog. Lipid Res.">
        <title>GDSL family of serine esterases/lipases.</title>
        <authorList>
            <person name="Akoh C.C."/>
            <person name="Lee G.-C."/>
            <person name="Liaw Y.-C."/>
            <person name="Huang T.-H."/>
            <person name="Shaw J.-F."/>
        </authorList>
    </citation>
    <scope>REVIEW</scope>
</reference>
<reference key="6">
    <citation type="journal article" date="2008" name="Pak. J. Biol. Sci.">
        <title>Sequence analysis of GDSL lipase gene family in Arabidopsis thaliana.</title>
        <authorList>
            <person name="Ling H."/>
        </authorList>
    </citation>
    <scope>GENE FAMILY</scope>
</reference>